<sequence>MTGSTHNGGSRLIQYEDSSNKEFIRKYLVETRNEFIEKQMRALYECREIYKDDIDEVINILTYALENNDSVLLRHEVAYVIGQISNEKCNDILIKLLNDTEENLMVRHEAAEGLAAIGSDSNIEVIKKFLNDEKVEVRETCELALSSLLEKNKYAVCSCSNKDSIKEAIKKKRNDEFVSKKFNTIDPVVFTSSGNAKSVDALIEDLNNEAVPLKLRYEALFKLRDMETDVSINALGEVLIKDKKSAIFRHEVAFVLGQALHLNSLKYLISSLQNVGEHEMVRHEVALALGSLGSLNINSQEYKNVQSEIISTLKTFSKDACRVVAESCLVGLDYIAENLNMAIEVN</sequence>
<proteinExistence type="evidence at protein level"/>
<comment type="function">
    <text evidence="4 5">Catalyzes the hydroxylation of the N(6)-(4-aminobutyl)-L-lysine intermediate produced by deoxyhypusine synthase/DHPS on a critical lysine of the eukaryotic translation initiation factor 5A/eIF-5A. This is the second step of the post-translational modification of that lysine into an unusual amino acid residue named hypusine. Hypusination is unique to mature eIF-5A factor and is essential for its function.</text>
</comment>
<comment type="catalytic activity">
    <reaction evidence="4 5">
        <text>[eIF5A protein]-deoxyhypusine + AH2 + O2 = [eIF5A protein]-hypusine + A + H2O</text>
        <dbReference type="Rhea" id="RHEA:14101"/>
        <dbReference type="Rhea" id="RHEA-COMP:10144"/>
        <dbReference type="Rhea" id="RHEA-COMP:12592"/>
        <dbReference type="ChEBI" id="CHEBI:13193"/>
        <dbReference type="ChEBI" id="CHEBI:15377"/>
        <dbReference type="ChEBI" id="CHEBI:15379"/>
        <dbReference type="ChEBI" id="CHEBI:17499"/>
        <dbReference type="ChEBI" id="CHEBI:82657"/>
        <dbReference type="ChEBI" id="CHEBI:91175"/>
        <dbReference type="EC" id="1.14.99.29"/>
    </reaction>
</comment>
<comment type="cofactor">
    <cofactor evidence="1 4">
        <name>Fe(2+)</name>
        <dbReference type="ChEBI" id="CHEBI:29033"/>
    </cofactor>
    <text evidence="1 4">Binds 2 Fe(2+) ions per subunit.</text>
</comment>
<comment type="pathway">
    <text evidence="4 5">Protein modification; eIF5A hypusination.</text>
</comment>
<comment type="developmental stage">
    <text evidence="5">Expressed throughout the intraerythrocytic cycle, with highest levels during the ring, mature trophozoite and mature schizont stages and lower levels during the young trophozoite and young schizont stages.</text>
</comment>
<comment type="miscellaneous">
    <text evidence="5">Inhibited by the drug zileuton in vitro.</text>
</comment>
<comment type="similarity">
    <text evidence="3">Belongs to the deoxyhypusine hydroxylase family.</text>
</comment>
<keyword id="KW-0386">Hypusine biosynthesis</keyword>
<keyword id="KW-0408">Iron</keyword>
<keyword id="KW-0479">Metal-binding</keyword>
<keyword id="KW-0503">Monooxygenase</keyword>
<keyword id="KW-0560">Oxidoreductase</keyword>
<keyword id="KW-1185">Reference proteome</keyword>
<keyword id="KW-0677">Repeat</keyword>
<name>DOHH_PLAVS</name>
<gene>
    <name evidence="8" type="primary">dohh</name>
    <name type="ORF">PVX_121970</name>
</gene>
<evidence type="ECO:0000250" key="1">
    <source>
        <dbReference type="UniProtKB" id="P47120"/>
    </source>
</evidence>
<evidence type="ECO:0000250" key="2">
    <source>
        <dbReference type="UniProtKB" id="Q9BU89"/>
    </source>
</evidence>
<evidence type="ECO:0000255" key="3"/>
<evidence type="ECO:0000255" key="4">
    <source>
        <dbReference type="HAMAP-Rule" id="MF_03101"/>
    </source>
</evidence>
<evidence type="ECO:0000269" key="5">
    <source>
    </source>
</evidence>
<evidence type="ECO:0000303" key="6">
    <source>
    </source>
</evidence>
<evidence type="ECO:0000305" key="7"/>
<evidence type="ECO:0000312" key="8">
    <source>
        <dbReference type="EMBL" id="CAP62402.1"/>
    </source>
</evidence>
<evidence type="ECO:0000312" key="9">
    <source>
        <dbReference type="EMBL" id="EDL47230.1"/>
    </source>
</evidence>
<accession>A5JZ19</accession>
<accession>M5B5E1</accession>
<feature type="chain" id="PRO_0000423886" description="Deoxyhypusine hydroxylase">
    <location>
        <begin position="1"/>
        <end position="346"/>
    </location>
</feature>
<feature type="repeat" description="HEAT-like PBS-type 1" evidence="3">
    <location>
        <begin position="71"/>
        <end position="100"/>
    </location>
</feature>
<feature type="repeat" description="HEAT-like PBS-type 2" evidence="3">
    <location>
        <begin position="104"/>
        <end position="133"/>
    </location>
</feature>
<feature type="repeat" description="HEAT-like PBS-type 3" evidence="3">
    <location>
        <begin position="213"/>
        <end position="242"/>
    </location>
</feature>
<feature type="repeat" description="HEAT-like PBS-type 4" evidence="3">
    <location>
        <begin position="246"/>
        <end position="275"/>
    </location>
</feature>
<feature type="repeat" description="HEAT-like PBS-type 5" evidence="3">
    <location>
        <begin position="279"/>
        <end position="320"/>
    </location>
</feature>
<feature type="binding site" evidence="2 4">
    <location>
        <position position="75"/>
    </location>
    <ligand>
        <name>Fe cation</name>
        <dbReference type="ChEBI" id="CHEBI:24875"/>
        <label>1</label>
    </ligand>
</feature>
<feature type="binding site" evidence="2 4">
    <location>
        <position position="108"/>
    </location>
    <ligand>
        <name>Fe cation</name>
        <dbReference type="ChEBI" id="CHEBI:24875"/>
        <label>2</label>
    </ligand>
</feature>
<feature type="binding site" evidence="2 4">
    <location>
        <position position="109"/>
    </location>
    <ligand>
        <name>Fe cation</name>
        <dbReference type="ChEBI" id="CHEBI:24875"/>
        <label>2</label>
    </ligand>
</feature>
<feature type="binding site" evidence="2 4">
    <location>
        <position position="250"/>
    </location>
    <ligand>
        <name>Fe cation</name>
        <dbReference type="ChEBI" id="CHEBI:24875"/>
        <label>2</label>
    </ligand>
</feature>
<feature type="binding site" evidence="2 4">
    <location>
        <position position="283"/>
    </location>
    <ligand>
        <name>Fe cation</name>
        <dbReference type="ChEBI" id="CHEBI:24875"/>
        <label>1</label>
    </ligand>
</feature>
<feature type="binding site" evidence="2 4">
    <location>
        <position position="284"/>
    </location>
    <ligand>
        <name>Fe cation</name>
        <dbReference type="ChEBI" id="CHEBI:24875"/>
        <label>1</label>
    </ligand>
</feature>
<dbReference type="EC" id="1.14.99.29" evidence="4 5"/>
<dbReference type="EMBL" id="AM931168">
    <property type="protein sequence ID" value="CAP62402.1"/>
    <property type="molecule type" value="mRNA"/>
</dbReference>
<dbReference type="EMBL" id="AAKM01000001">
    <property type="protein sequence ID" value="EDL47230.1"/>
    <property type="molecule type" value="Genomic_DNA"/>
</dbReference>
<dbReference type="RefSeq" id="XP_001616957.1">
    <property type="nucleotide sequence ID" value="XM_001616907.1"/>
</dbReference>
<dbReference type="SMR" id="A5JZ19"/>
<dbReference type="STRING" id="126793.A5JZ19"/>
<dbReference type="EnsemblProtists" id="EDL47230">
    <property type="protein sequence ID" value="EDL47230"/>
    <property type="gene ID" value="PVX_121970"/>
</dbReference>
<dbReference type="GeneID" id="5476266"/>
<dbReference type="KEGG" id="pvx:PVX_121970"/>
<dbReference type="VEuPathDB" id="PlasmoDB:PVX_121970"/>
<dbReference type="InParanoid" id="A5JZ19"/>
<dbReference type="OMA" id="LQEPCSI"/>
<dbReference type="PhylomeDB" id="A5JZ19"/>
<dbReference type="BRENDA" id="1.14.99.29">
    <property type="organism ID" value="4894"/>
</dbReference>
<dbReference type="UniPathway" id="UPA00354"/>
<dbReference type="Proteomes" id="UP000008333">
    <property type="component" value="Chromosome 14"/>
</dbReference>
<dbReference type="GO" id="GO:0019135">
    <property type="term" value="F:deoxyhypusine monooxygenase activity"/>
    <property type="evidence" value="ECO:0007669"/>
    <property type="project" value="UniProtKB-UniRule"/>
</dbReference>
<dbReference type="GO" id="GO:0005506">
    <property type="term" value="F:iron ion binding"/>
    <property type="evidence" value="ECO:0000250"/>
    <property type="project" value="UniProtKB"/>
</dbReference>
<dbReference type="FunFam" id="1.25.10.10:FF:000597">
    <property type="entry name" value="Deoxyhypusine hydroxylase"/>
    <property type="match status" value="1"/>
</dbReference>
<dbReference type="FunFam" id="1.25.10.10:FF:000633">
    <property type="entry name" value="Deoxyhypusine hydroxylase"/>
    <property type="match status" value="1"/>
</dbReference>
<dbReference type="Gene3D" id="1.25.10.10">
    <property type="entry name" value="Leucine-rich Repeat Variant"/>
    <property type="match status" value="2"/>
</dbReference>
<dbReference type="HAMAP" id="MF_03101">
    <property type="entry name" value="Deoxyhypusine_hydroxylase"/>
    <property type="match status" value="1"/>
</dbReference>
<dbReference type="InterPro" id="IPR011989">
    <property type="entry name" value="ARM-like"/>
</dbReference>
<dbReference type="InterPro" id="IPR016024">
    <property type="entry name" value="ARM-type_fold"/>
</dbReference>
<dbReference type="InterPro" id="IPR027517">
    <property type="entry name" value="Deoxyhypusine_hydroxylase"/>
</dbReference>
<dbReference type="InterPro" id="IPR004155">
    <property type="entry name" value="PBS_lyase_HEAT"/>
</dbReference>
<dbReference type="PANTHER" id="PTHR12697:SF5">
    <property type="entry name" value="DEOXYHYPUSINE HYDROXYLASE"/>
    <property type="match status" value="1"/>
</dbReference>
<dbReference type="PANTHER" id="PTHR12697">
    <property type="entry name" value="PBS LYASE HEAT-LIKE PROTEIN"/>
    <property type="match status" value="1"/>
</dbReference>
<dbReference type="Pfam" id="PF13646">
    <property type="entry name" value="HEAT_2"/>
    <property type="match status" value="1"/>
</dbReference>
<dbReference type="SMART" id="SM00567">
    <property type="entry name" value="EZ_HEAT"/>
    <property type="match status" value="5"/>
</dbReference>
<dbReference type="SUPFAM" id="SSF48371">
    <property type="entry name" value="ARM repeat"/>
    <property type="match status" value="1"/>
</dbReference>
<organism>
    <name type="scientific">Plasmodium vivax (strain Salvador I)</name>
    <dbReference type="NCBI Taxonomy" id="126793"/>
    <lineage>
        <taxon>Eukaryota</taxon>
        <taxon>Sar</taxon>
        <taxon>Alveolata</taxon>
        <taxon>Apicomplexa</taxon>
        <taxon>Aconoidasida</taxon>
        <taxon>Haemosporida</taxon>
        <taxon>Plasmodiidae</taxon>
        <taxon>Plasmodium</taxon>
        <taxon>Plasmodium (Plasmodium)</taxon>
    </lineage>
</organism>
<protein>
    <recommendedName>
        <fullName evidence="6">Deoxyhypusine hydroxylase</fullName>
        <shortName evidence="6">DOHH</shortName>
        <ecNumber evidence="4 5">1.14.99.29</ecNumber>
    </recommendedName>
    <alternativeName>
        <fullName evidence="1">Deoxyhypusine dioxygenase</fullName>
    </alternativeName>
    <alternativeName>
        <fullName evidence="1">Deoxyhypusine monooxygenase</fullName>
    </alternativeName>
</protein>
<reference evidence="7 8" key="1">
    <citation type="journal article" date="2013" name="PLoS ONE">
        <title>Deoxyhypusine hydroxylase from Plasmodium vivax, the neglected human malaria parasite: molecular cloning, expression and specific inhibition by the 5-LOX inhibitor zileuton.</title>
        <authorList>
            <person name="Atemnkeng V.A."/>
            <person name="Pink M."/>
            <person name="Schmitz-Spanke S."/>
            <person name="Wu X.J."/>
            <person name="Dong L.L."/>
            <person name="Zhao K.H."/>
            <person name="May C."/>
            <person name="Laufer S."/>
            <person name="Langer B."/>
            <person name="Kaiser A."/>
        </authorList>
    </citation>
    <scope>NUCLEOTIDE SEQUENCE [GENOMIC DNA]</scope>
    <scope>FUNCTION</scope>
    <scope>CATALYTIC ACTIVITY</scope>
    <scope>PATHWAY</scope>
    <scope>DEVELOPMENTAL STAGE</scope>
    <source>
        <strain evidence="8">Salvador I</strain>
    </source>
</reference>
<reference evidence="9" key="2">
    <citation type="journal article" date="2008" name="Nature">
        <title>Comparative genomics of the neglected human malaria parasite Plasmodium vivax.</title>
        <authorList>
            <person name="Carlton J.M."/>
            <person name="Adams J.H."/>
            <person name="Silva J.C."/>
            <person name="Bidwell S.L."/>
            <person name="Lorenzi H."/>
            <person name="Caler E."/>
            <person name="Crabtree J."/>
            <person name="Angiuoli S.V."/>
            <person name="Merino E.F."/>
            <person name="Amedeo P."/>
            <person name="Cheng Q."/>
            <person name="Coulson R.M.R."/>
            <person name="Crabb B.S."/>
            <person name="del Portillo H.A."/>
            <person name="Essien K."/>
            <person name="Feldblyum T.V."/>
            <person name="Fernandez-Becerra C."/>
            <person name="Gilson P.R."/>
            <person name="Gueye A.H."/>
            <person name="Guo X."/>
            <person name="Kang'a S."/>
            <person name="Kooij T.W.A."/>
            <person name="Korsinczky M."/>
            <person name="Meyer E.V.-S."/>
            <person name="Nene V."/>
            <person name="Paulsen I."/>
            <person name="White O."/>
            <person name="Ralph S.A."/>
            <person name="Ren Q."/>
            <person name="Sargeant T.J."/>
            <person name="Salzberg S.L."/>
            <person name="Stoeckert C.J."/>
            <person name="Sullivan S.A."/>
            <person name="Yamamoto M.M."/>
            <person name="Hoffman S.L."/>
            <person name="Wortman J.R."/>
            <person name="Gardner M.J."/>
            <person name="Galinski M.R."/>
            <person name="Barnwell J.W."/>
            <person name="Fraser-Liggett C.M."/>
        </authorList>
    </citation>
    <scope>NUCLEOTIDE SEQUENCE [LARGE SCALE GENOMIC DNA]</scope>
    <source>
        <strain evidence="9">Salvador I</strain>
    </source>
</reference>